<name>Y523_TRIL1</name>
<keyword id="KW-0378">Hydrolase</keyword>
<keyword id="KW-0479">Metal-binding</keyword>
<keyword id="KW-0482">Metalloprotease</keyword>
<keyword id="KW-0645">Protease</keyword>
<keyword id="KW-1185">Reference proteome</keyword>
<keyword id="KW-0862">Zinc</keyword>
<sequence length="230" mass="25550">MSNNAIKDWPEDERPREKLLKRGAAALSDAELLALVLRTGDAAAGKSAIDLGRELLERFDGNLRELAQAELNELQQIKGLGLAKAASIKAAFTLGKRFQARRLETLERFTSPAQVFDFFHHELRDNRKELFLTLLLDGKNRITRKVQVSEGSLNQSIVHPREVFAPAVRESAAAVIFIHNHPSGDPAPSREDHEITRRLNEAGEILGIKVLDHIIIGDGAYFSFVESGLL</sequence>
<comment type="similarity">
    <text evidence="2">Belongs to the UPF0758 family.</text>
</comment>
<dbReference type="EMBL" id="CP001089">
    <property type="protein sequence ID" value="ACD94251.1"/>
    <property type="molecule type" value="Genomic_DNA"/>
</dbReference>
<dbReference type="RefSeq" id="WP_012468607.1">
    <property type="nucleotide sequence ID" value="NC_010814.1"/>
</dbReference>
<dbReference type="SMR" id="B3E339"/>
<dbReference type="STRING" id="398767.Glov_0523"/>
<dbReference type="KEGG" id="glo:Glov_0523"/>
<dbReference type="eggNOG" id="COG2003">
    <property type="taxonomic scope" value="Bacteria"/>
</dbReference>
<dbReference type="HOGENOM" id="CLU_073529_0_2_7"/>
<dbReference type="OrthoDB" id="9804482at2"/>
<dbReference type="Proteomes" id="UP000002420">
    <property type="component" value="Chromosome"/>
</dbReference>
<dbReference type="GO" id="GO:0046872">
    <property type="term" value="F:metal ion binding"/>
    <property type="evidence" value="ECO:0007669"/>
    <property type="project" value="UniProtKB-KW"/>
</dbReference>
<dbReference type="GO" id="GO:0008237">
    <property type="term" value="F:metallopeptidase activity"/>
    <property type="evidence" value="ECO:0007669"/>
    <property type="project" value="UniProtKB-KW"/>
</dbReference>
<dbReference type="GO" id="GO:0006508">
    <property type="term" value="P:proteolysis"/>
    <property type="evidence" value="ECO:0007669"/>
    <property type="project" value="UniProtKB-KW"/>
</dbReference>
<dbReference type="CDD" id="cd08071">
    <property type="entry name" value="MPN_DUF2466"/>
    <property type="match status" value="1"/>
</dbReference>
<dbReference type="Gene3D" id="1.10.150.20">
    <property type="entry name" value="5' to 3' exonuclease, C-terminal subdomain"/>
    <property type="match status" value="1"/>
</dbReference>
<dbReference type="Gene3D" id="3.40.140.10">
    <property type="entry name" value="Cytidine Deaminase, domain 2"/>
    <property type="match status" value="1"/>
</dbReference>
<dbReference type="InterPro" id="IPR037518">
    <property type="entry name" value="MPN"/>
</dbReference>
<dbReference type="InterPro" id="IPR025657">
    <property type="entry name" value="RadC_JAB"/>
</dbReference>
<dbReference type="InterPro" id="IPR010994">
    <property type="entry name" value="RuvA_2-like"/>
</dbReference>
<dbReference type="InterPro" id="IPR001405">
    <property type="entry name" value="UPF0758"/>
</dbReference>
<dbReference type="InterPro" id="IPR020891">
    <property type="entry name" value="UPF0758_CS"/>
</dbReference>
<dbReference type="InterPro" id="IPR046778">
    <property type="entry name" value="UPF0758_N"/>
</dbReference>
<dbReference type="NCBIfam" id="NF000642">
    <property type="entry name" value="PRK00024.1"/>
    <property type="match status" value="1"/>
</dbReference>
<dbReference type="NCBIfam" id="TIGR00608">
    <property type="entry name" value="radc"/>
    <property type="match status" value="1"/>
</dbReference>
<dbReference type="PANTHER" id="PTHR30471">
    <property type="entry name" value="DNA REPAIR PROTEIN RADC"/>
    <property type="match status" value="1"/>
</dbReference>
<dbReference type="PANTHER" id="PTHR30471:SF3">
    <property type="entry name" value="UPF0758 PROTEIN YEES-RELATED"/>
    <property type="match status" value="1"/>
</dbReference>
<dbReference type="Pfam" id="PF04002">
    <property type="entry name" value="RadC"/>
    <property type="match status" value="1"/>
</dbReference>
<dbReference type="Pfam" id="PF20582">
    <property type="entry name" value="UPF0758_N"/>
    <property type="match status" value="1"/>
</dbReference>
<dbReference type="SUPFAM" id="SSF47781">
    <property type="entry name" value="RuvA domain 2-like"/>
    <property type="match status" value="1"/>
</dbReference>
<dbReference type="PROSITE" id="PS50249">
    <property type="entry name" value="MPN"/>
    <property type="match status" value="1"/>
</dbReference>
<dbReference type="PROSITE" id="PS01302">
    <property type="entry name" value="UPF0758"/>
    <property type="match status" value="1"/>
</dbReference>
<protein>
    <recommendedName>
        <fullName>UPF0758 protein Glov_0523</fullName>
    </recommendedName>
</protein>
<gene>
    <name type="ordered locus">Glov_0523</name>
</gene>
<proteinExistence type="inferred from homology"/>
<reference key="1">
    <citation type="submission" date="2008-05" db="EMBL/GenBank/DDBJ databases">
        <title>Complete sequence of chromosome of Geobacter lovleyi SZ.</title>
        <authorList>
            <consortium name="US DOE Joint Genome Institute"/>
            <person name="Lucas S."/>
            <person name="Copeland A."/>
            <person name="Lapidus A."/>
            <person name="Glavina del Rio T."/>
            <person name="Dalin E."/>
            <person name="Tice H."/>
            <person name="Bruce D."/>
            <person name="Goodwin L."/>
            <person name="Pitluck S."/>
            <person name="Chertkov O."/>
            <person name="Meincke L."/>
            <person name="Brettin T."/>
            <person name="Detter J.C."/>
            <person name="Han C."/>
            <person name="Tapia R."/>
            <person name="Kuske C.R."/>
            <person name="Schmutz J."/>
            <person name="Larimer F."/>
            <person name="Land M."/>
            <person name="Hauser L."/>
            <person name="Kyrpides N."/>
            <person name="Mikhailova N."/>
            <person name="Sung Y."/>
            <person name="Fletcher K.E."/>
            <person name="Ritalahti K.M."/>
            <person name="Loeffler F.E."/>
            <person name="Richardson P."/>
        </authorList>
    </citation>
    <scope>NUCLEOTIDE SEQUENCE [LARGE SCALE GENOMIC DNA]</scope>
    <source>
        <strain>ATCC BAA-1151 / DSM 17278 / SZ</strain>
    </source>
</reference>
<organism>
    <name type="scientific">Trichlorobacter lovleyi (strain ATCC BAA-1151 / DSM 17278 / SZ)</name>
    <name type="common">Geobacter lovleyi</name>
    <dbReference type="NCBI Taxonomy" id="398767"/>
    <lineage>
        <taxon>Bacteria</taxon>
        <taxon>Pseudomonadati</taxon>
        <taxon>Thermodesulfobacteriota</taxon>
        <taxon>Desulfuromonadia</taxon>
        <taxon>Geobacterales</taxon>
        <taxon>Geobacteraceae</taxon>
        <taxon>Trichlorobacter</taxon>
    </lineage>
</organism>
<accession>B3E339</accession>
<feature type="chain" id="PRO_1000195299" description="UPF0758 protein Glov_0523">
    <location>
        <begin position="1"/>
        <end position="230"/>
    </location>
</feature>
<feature type="domain" description="MPN" evidence="1">
    <location>
        <begin position="108"/>
        <end position="230"/>
    </location>
</feature>
<feature type="short sequence motif" description="JAMM motif" evidence="1">
    <location>
        <begin position="179"/>
        <end position="192"/>
    </location>
</feature>
<feature type="binding site" evidence="1">
    <location>
        <position position="179"/>
    </location>
    <ligand>
        <name>Zn(2+)</name>
        <dbReference type="ChEBI" id="CHEBI:29105"/>
        <note>catalytic</note>
    </ligand>
</feature>
<feature type="binding site" evidence="1">
    <location>
        <position position="181"/>
    </location>
    <ligand>
        <name>Zn(2+)</name>
        <dbReference type="ChEBI" id="CHEBI:29105"/>
        <note>catalytic</note>
    </ligand>
</feature>
<feature type="binding site" evidence="1">
    <location>
        <position position="192"/>
    </location>
    <ligand>
        <name>Zn(2+)</name>
        <dbReference type="ChEBI" id="CHEBI:29105"/>
        <note>catalytic</note>
    </ligand>
</feature>
<evidence type="ECO:0000255" key="1">
    <source>
        <dbReference type="PROSITE-ProRule" id="PRU01182"/>
    </source>
</evidence>
<evidence type="ECO:0000305" key="2"/>